<dbReference type="EMBL" id="CP001127">
    <property type="protein sequence ID" value="ACF90957.1"/>
    <property type="molecule type" value="Genomic_DNA"/>
</dbReference>
<dbReference type="RefSeq" id="WP_001519051.1">
    <property type="nucleotide sequence ID" value="NC_011094.1"/>
</dbReference>
<dbReference type="SMR" id="B4TZX9"/>
<dbReference type="KEGG" id="sew:SeSA_A3927"/>
<dbReference type="HOGENOM" id="CLU_064548_3_1_6"/>
<dbReference type="Proteomes" id="UP000001865">
    <property type="component" value="Chromosome"/>
</dbReference>
<dbReference type="GO" id="GO:0022625">
    <property type="term" value="C:cytosolic large ribosomal subunit"/>
    <property type="evidence" value="ECO:0007669"/>
    <property type="project" value="TreeGrafter"/>
</dbReference>
<dbReference type="GO" id="GO:0003735">
    <property type="term" value="F:structural constituent of ribosome"/>
    <property type="evidence" value="ECO:0007669"/>
    <property type="project" value="InterPro"/>
</dbReference>
<dbReference type="GO" id="GO:0006412">
    <property type="term" value="P:translation"/>
    <property type="evidence" value="ECO:0007669"/>
    <property type="project" value="UniProtKB-UniRule"/>
</dbReference>
<dbReference type="FunFam" id="2.30.170.40:FF:000001">
    <property type="entry name" value="50S ribosomal protein L28"/>
    <property type="match status" value="1"/>
</dbReference>
<dbReference type="Gene3D" id="2.30.170.40">
    <property type="entry name" value="Ribosomal protein L28/L24"/>
    <property type="match status" value="1"/>
</dbReference>
<dbReference type="HAMAP" id="MF_00373">
    <property type="entry name" value="Ribosomal_bL28"/>
    <property type="match status" value="1"/>
</dbReference>
<dbReference type="InterPro" id="IPR026569">
    <property type="entry name" value="Ribosomal_bL28"/>
</dbReference>
<dbReference type="InterPro" id="IPR034704">
    <property type="entry name" value="Ribosomal_bL28/bL31-like_sf"/>
</dbReference>
<dbReference type="InterPro" id="IPR001383">
    <property type="entry name" value="Ribosomal_bL28_bact-type"/>
</dbReference>
<dbReference type="InterPro" id="IPR037147">
    <property type="entry name" value="Ribosomal_bL28_sf"/>
</dbReference>
<dbReference type="NCBIfam" id="TIGR00009">
    <property type="entry name" value="L28"/>
    <property type="match status" value="1"/>
</dbReference>
<dbReference type="PANTHER" id="PTHR13528">
    <property type="entry name" value="39S RIBOSOMAL PROTEIN L28, MITOCHONDRIAL"/>
    <property type="match status" value="1"/>
</dbReference>
<dbReference type="PANTHER" id="PTHR13528:SF2">
    <property type="entry name" value="LARGE RIBOSOMAL SUBUNIT PROTEIN BL28M"/>
    <property type="match status" value="1"/>
</dbReference>
<dbReference type="Pfam" id="PF00830">
    <property type="entry name" value="Ribosomal_L28"/>
    <property type="match status" value="1"/>
</dbReference>
<dbReference type="SUPFAM" id="SSF143800">
    <property type="entry name" value="L28p-like"/>
    <property type="match status" value="1"/>
</dbReference>
<gene>
    <name evidence="1" type="primary">rpmB</name>
    <name type="ordered locus">SeSA_A3927</name>
</gene>
<accession>B4TZX9</accession>
<protein>
    <recommendedName>
        <fullName evidence="1">Large ribosomal subunit protein bL28</fullName>
    </recommendedName>
    <alternativeName>
        <fullName evidence="2">50S ribosomal protein L28</fullName>
    </alternativeName>
</protein>
<reference key="1">
    <citation type="journal article" date="2011" name="J. Bacteriol.">
        <title>Comparative genomics of 28 Salmonella enterica isolates: evidence for CRISPR-mediated adaptive sublineage evolution.</title>
        <authorList>
            <person name="Fricke W.F."/>
            <person name="Mammel M.K."/>
            <person name="McDermott P.F."/>
            <person name="Tartera C."/>
            <person name="White D.G."/>
            <person name="Leclerc J.E."/>
            <person name="Ravel J."/>
            <person name="Cebula T.A."/>
        </authorList>
    </citation>
    <scope>NUCLEOTIDE SEQUENCE [LARGE SCALE GENOMIC DNA]</scope>
    <source>
        <strain>CVM19633</strain>
    </source>
</reference>
<keyword id="KW-0687">Ribonucleoprotein</keyword>
<keyword id="KW-0689">Ribosomal protein</keyword>
<proteinExistence type="inferred from homology"/>
<name>RL28_SALSV</name>
<evidence type="ECO:0000255" key="1">
    <source>
        <dbReference type="HAMAP-Rule" id="MF_00373"/>
    </source>
</evidence>
<evidence type="ECO:0000305" key="2"/>
<sequence length="78" mass="9051">MSRVCQVTGKRPVTGNNRSHALNATKRRFLPNLHSHRFWVESEKRFVTLRVSAKGMRIIDKKGIETVLSELRARGEKY</sequence>
<organism>
    <name type="scientific">Salmonella schwarzengrund (strain CVM19633)</name>
    <dbReference type="NCBI Taxonomy" id="439843"/>
    <lineage>
        <taxon>Bacteria</taxon>
        <taxon>Pseudomonadati</taxon>
        <taxon>Pseudomonadota</taxon>
        <taxon>Gammaproteobacteria</taxon>
        <taxon>Enterobacterales</taxon>
        <taxon>Enterobacteriaceae</taxon>
        <taxon>Salmonella</taxon>
    </lineage>
</organism>
<comment type="similarity">
    <text evidence="1">Belongs to the bacterial ribosomal protein bL28 family.</text>
</comment>
<feature type="chain" id="PRO_1000121687" description="Large ribosomal subunit protein bL28">
    <location>
        <begin position="1"/>
        <end position="78"/>
    </location>
</feature>